<sequence length="232" mass="26716">MKSKLIILLTLVPFSSFSTGNNFEINKTRVIYSDSTPSVQISNNKAYPLIIQSNVWDESNNKNHDFIATPPIFKMESESRNIIKIIKTTINLPDSQESMRWLCIESMPPIEKSTKINRKEGRTDSINISIRGCIKLIYRPASVPSPVFNNIVEKLKWHKNGKYLVLKNNTPYYISFSEVFFDSDKVNNAKDILYVKPYSEKKIDISNRIIKKIKWAMIDDAGAKTKLYESIL</sequence>
<reference key="1">
    <citation type="submission" date="1994-01" db="EMBL/GenBank/DDBJ databases">
        <authorList>
            <person name="Wolf M.K."/>
            <person name="de Haan L.A.M."/>
            <person name="Cassels F.C."/>
            <person name="Willshaw G.A."/>
            <person name="Gestel E.C.M."/>
            <person name="Gaastra W."/>
            <person name="Warren R."/>
            <person name="Boedeker E.C."/>
        </authorList>
    </citation>
    <scope>NUCLEOTIDE SEQUENCE [GENOMIC DNA]</scope>
    <source>
        <strain>E8775</strain>
    </source>
</reference>
<evidence type="ECO:0000255" key="1"/>
<evidence type="ECO:0000305" key="2"/>
<protein>
    <recommendedName>
        <fullName>Chaperone protein CssC</fullName>
    </recommendedName>
</protein>
<comment type="function">
    <text>Involved in the biogenesis of the CS6 fimbria.</text>
</comment>
<comment type="subcellular location">
    <subcellularLocation>
        <location evidence="2">Periplasm</location>
    </subcellularLocation>
</comment>
<comment type="similarity">
    <text evidence="2">Belongs to the periplasmic pilus chaperone family.</text>
</comment>
<proteinExistence type="inferred from homology"/>
<gene>
    <name type="primary">cssC</name>
</gene>
<organism>
    <name type="scientific">Escherichia coli</name>
    <dbReference type="NCBI Taxonomy" id="562"/>
    <lineage>
        <taxon>Bacteria</taxon>
        <taxon>Pseudomonadati</taxon>
        <taxon>Pseudomonadota</taxon>
        <taxon>Gammaproteobacteria</taxon>
        <taxon>Enterobacterales</taxon>
        <taxon>Enterobacteriaceae</taxon>
        <taxon>Escherichia</taxon>
    </lineage>
</organism>
<dbReference type="EMBL" id="U04846">
    <property type="protein sequence ID" value="AAB51363.1"/>
    <property type="molecule type" value="Unassigned_DNA"/>
</dbReference>
<dbReference type="SMR" id="P53519"/>
<dbReference type="GO" id="GO:0030288">
    <property type="term" value="C:outer membrane-bounded periplasmic space"/>
    <property type="evidence" value="ECO:0007669"/>
    <property type="project" value="InterPro"/>
</dbReference>
<dbReference type="GO" id="GO:0071555">
    <property type="term" value="P:cell wall organization"/>
    <property type="evidence" value="ECO:0007669"/>
    <property type="project" value="InterPro"/>
</dbReference>
<dbReference type="GO" id="GO:0061077">
    <property type="term" value="P:chaperone-mediated protein folding"/>
    <property type="evidence" value="ECO:0007669"/>
    <property type="project" value="InterPro"/>
</dbReference>
<dbReference type="Gene3D" id="2.60.40.10">
    <property type="entry name" value="Immunoglobulins"/>
    <property type="match status" value="2"/>
</dbReference>
<dbReference type="InterPro" id="IPR013783">
    <property type="entry name" value="Ig-like_fold"/>
</dbReference>
<dbReference type="InterPro" id="IPR008962">
    <property type="entry name" value="PapD-like_sf"/>
</dbReference>
<dbReference type="InterPro" id="IPR050643">
    <property type="entry name" value="Periplasmic_pilus_chap"/>
</dbReference>
<dbReference type="InterPro" id="IPR036316">
    <property type="entry name" value="Pili_assmbl_chap_C_dom_sf"/>
</dbReference>
<dbReference type="InterPro" id="IPR001829">
    <property type="entry name" value="Pili_assmbl_chaperone_bac"/>
</dbReference>
<dbReference type="InterPro" id="IPR016148">
    <property type="entry name" value="Pili_assmbl_chaperone_C"/>
</dbReference>
<dbReference type="InterPro" id="IPR018046">
    <property type="entry name" value="Pili_assmbl_chaperone_CS"/>
</dbReference>
<dbReference type="InterPro" id="IPR016147">
    <property type="entry name" value="Pili_assmbl_chaperone_N"/>
</dbReference>
<dbReference type="PANTHER" id="PTHR30251:SF9">
    <property type="entry name" value="CHAPERONE PROTEIN CAF1M"/>
    <property type="match status" value="1"/>
</dbReference>
<dbReference type="PANTHER" id="PTHR30251">
    <property type="entry name" value="PILUS ASSEMBLY CHAPERONE"/>
    <property type="match status" value="1"/>
</dbReference>
<dbReference type="Pfam" id="PF02753">
    <property type="entry name" value="PapD_C"/>
    <property type="match status" value="1"/>
</dbReference>
<dbReference type="Pfam" id="PF00345">
    <property type="entry name" value="PapD_N"/>
    <property type="match status" value="1"/>
</dbReference>
<dbReference type="PRINTS" id="PR00969">
    <property type="entry name" value="CHAPERONPILI"/>
</dbReference>
<dbReference type="SUPFAM" id="SSF49354">
    <property type="entry name" value="PapD-like"/>
    <property type="match status" value="1"/>
</dbReference>
<dbReference type="SUPFAM" id="SSF49584">
    <property type="entry name" value="Periplasmic chaperone C-domain"/>
    <property type="match status" value="1"/>
</dbReference>
<dbReference type="PROSITE" id="PS00635">
    <property type="entry name" value="PILI_CHAPERONE"/>
    <property type="match status" value="1"/>
</dbReference>
<keyword id="KW-0143">Chaperone</keyword>
<keyword id="KW-1029">Fimbrium biogenesis</keyword>
<keyword id="KW-0393">Immunoglobulin domain</keyword>
<keyword id="KW-0574">Periplasm</keyword>
<keyword id="KW-0732">Signal</keyword>
<feature type="signal peptide" evidence="1">
    <location>
        <begin position="1"/>
        <end position="20"/>
    </location>
</feature>
<feature type="chain" id="PRO_0000009268" description="Chaperone protein CssC">
    <location>
        <begin position="21"/>
        <end position="232"/>
    </location>
</feature>
<accession>P53519</accession>
<name>CSSC2_ECOLX</name>